<feature type="signal peptide">
    <location>
        <begin position="1"/>
        <end position="23"/>
    </location>
</feature>
<feature type="chain" id="PRO_0000032212" description="Glutenin, low molecular weight subunit 1D1">
    <location>
        <begin position="24"/>
        <end position="307"/>
    </location>
</feature>
<feature type="region of interest" description="Disordered" evidence="1">
    <location>
        <begin position="31"/>
        <end position="88"/>
    </location>
</feature>
<feature type="region of interest" description="Disordered" evidence="1">
    <location>
        <begin position="105"/>
        <end position="126"/>
    </location>
</feature>
<feature type="compositionally biased region" description="Low complexity" evidence="1">
    <location>
        <begin position="43"/>
        <end position="88"/>
    </location>
</feature>
<protein>
    <recommendedName>
        <fullName>Glutenin, low molecular weight subunit 1D1</fullName>
    </recommendedName>
</protein>
<name>GLTB_WHEAT</name>
<dbReference type="EMBL" id="X13306">
    <property type="protein sequence ID" value="CAA31685.1"/>
    <property type="molecule type" value="Genomic_DNA"/>
</dbReference>
<dbReference type="PIR" id="S04325">
    <property type="entry name" value="S04325"/>
</dbReference>
<dbReference type="RefSeq" id="NP_001392020.1">
    <property type="nucleotide sequence ID" value="NM_001405091.1"/>
</dbReference>
<dbReference type="SMR" id="P10386"/>
<dbReference type="STRING" id="4565.P10386"/>
<dbReference type="Allergome" id="2674">
    <property type="allergen name" value="Tri a 36"/>
</dbReference>
<dbReference type="GeneID" id="100125697"/>
<dbReference type="OMA" id="METRCIP"/>
<dbReference type="Proteomes" id="UP000019116">
    <property type="component" value="Unplaced"/>
</dbReference>
<dbReference type="GO" id="GO:0045735">
    <property type="term" value="F:nutrient reservoir activity"/>
    <property type="evidence" value="ECO:0007669"/>
    <property type="project" value="UniProtKB-KW"/>
</dbReference>
<dbReference type="Gene3D" id="1.10.110.10">
    <property type="entry name" value="Plant lipid-transfer and hydrophobic proteins"/>
    <property type="match status" value="1"/>
</dbReference>
<dbReference type="InterPro" id="IPR036312">
    <property type="entry name" value="Bifun_inhib/LTP/seed_sf"/>
</dbReference>
<dbReference type="InterPro" id="IPR016140">
    <property type="entry name" value="Bifunc_inhib/LTP/seed_store"/>
</dbReference>
<dbReference type="InterPro" id="IPR001954">
    <property type="entry name" value="Glia_glutenin"/>
</dbReference>
<dbReference type="PANTHER" id="PTHR33454:SF18">
    <property type="entry name" value="GLUTENIN, LOW MOLECULAR WEIGHT SUBUNIT"/>
    <property type="match status" value="1"/>
</dbReference>
<dbReference type="PANTHER" id="PTHR33454">
    <property type="entry name" value="PROLAMIN PPROL 14P"/>
    <property type="match status" value="1"/>
</dbReference>
<dbReference type="Pfam" id="PF13016">
    <property type="entry name" value="Gliadin"/>
    <property type="match status" value="1"/>
</dbReference>
<dbReference type="PRINTS" id="PR00208">
    <property type="entry name" value="GLIADGLUTEN"/>
</dbReference>
<dbReference type="PRINTS" id="PR00209">
    <property type="entry name" value="GLIADIN"/>
</dbReference>
<dbReference type="SMART" id="SM00499">
    <property type="entry name" value="AAI"/>
    <property type="match status" value="1"/>
</dbReference>
<dbReference type="SUPFAM" id="SSF47699">
    <property type="entry name" value="Bifunctional inhibitor/lipid-transfer protein/seed storage 2S albumin"/>
    <property type="match status" value="1"/>
</dbReference>
<organism>
    <name type="scientific">Triticum aestivum</name>
    <name type="common">Wheat</name>
    <dbReference type="NCBI Taxonomy" id="4565"/>
    <lineage>
        <taxon>Eukaryota</taxon>
        <taxon>Viridiplantae</taxon>
        <taxon>Streptophyta</taxon>
        <taxon>Embryophyta</taxon>
        <taxon>Tracheophyta</taxon>
        <taxon>Spermatophyta</taxon>
        <taxon>Magnoliopsida</taxon>
        <taxon>Liliopsida</taxon>
        <taxon>Poales</taxon>
        <taxon>Poaceae</taxon>
        <taxon>BOP clade</taxon>
        <taxon>Pooideae</taxon>
        <taxon>Triticodae</taxon>
        <taxon>Triticeae</taxon>
        <taxon>Triticinae</taxon>
        <taxon>Triticum</taxon>
    </lineage>
</organism>
<comment type="function">
    <text>Glutenins are high-molecular weight seed storage proteins of wheat endosperm. Thought to be responsible for the visco-elastic property of wheat dough.</text>
</comment>
<comment type="subunit">
    <text>Disulfide-bridge linked aggregates.</text>
</comment>
<comment type="tissue specificity">
    <text evidence="2">Expressed in endosperm, but not in husk and leaf tissues.</text>
</comment>
<comment type="miscellaneous">
    <text>Glutenins are coded by several genes on each of the group 1 chromosomes of wheat.</text>
</comment>
<comment type="similarity">
    <text evidence="3">Belongs to the gliadin/glutenin family.</text>
</comment>
<accession>P10386</accession>
<proteinExistence type="evidence at transcript level"/>
<keyword id="KW-1015">Disulfide bond</keyword>
<keyword id="KW-1185">Reference proteome</keyword>
<keyword id="KW-0677">Repeat</keyword>
<keyword id="KW-0708">Seed storage protein</keyword>
<keyword id="KW-0732">Signal</keyword>
<keyword id="KW-0758">Storage protein</keyword>
<evidence type="ECO:0000256" key="1">
    <source>
        <dbReference type="SAM" id="MobiDB-lite"/>
    </source>
</evidence>
<evidence type="ECO:0000269" key="2">
    <source>
    </source>
</evidence>
<evidence type="ECO:0000305" key="3"/>
<reference key="1">
    <citation type="journal article" date="1989" name="Mol. Gen. Genet.">
        <title>Molecular characterization of an active wheat LMW glutenin gene and its relation to other wheat and barley prolamin genes.</title>
        <authorList>
            <person name="Colot V."/>
            <person name="Bartels D."/>
            <person name="Thompson R."/>
            <person name="Flavell R."/>
        </authorList>
    </citation>
    <scope>NUCLEOTIDE SEQUENCE [GENOMIC DNA]</scope>
    <source>
        <strain>cv. Chinese Spring</strain>
    </source>
</reference>
<reference key="2">
    <citation type="journal article" date="1993" name="EMBO J.">
        <title>In vivo footprinting of a low molecular weight glutenin gene (LMWG-1D1) in wheat endosperm.</title>
        <authorList>
            <person name="Hammond-Kosack M.C."/>
            <person name="Holdsworth M.J."/>
            <person name="Bevan M.W."/>
        </authorList>
    </citation>
    <scope>NUCLEOTIDE SEQUENCE [GENOMIC DNA]</scope>
    <scope>TISSUE SPECIFICITY</scope>
</reference>
<sequence length="307" mass="34928">MKTFLVFALLAVAATSAIAQMETRCIPGLERPWQQQPLPPQQTFPQQPLFSQQQQQQLFPQQPSFSQQQPPFWQQQPPFSQQQPILPQQPPFSQQQQLVLPQQPPFSQQQQPVLPPQQSPFPQQQQQHQQLVQQQIPVVQPSILQQLNPCKVFLQQQCSPVAMPQRLARSQMLQQSSCHVMQQQCCQQLPQIPQQSRYEAIRAIIYSIILQEQQQVQGSIQSQQQQPQQLGQCVSQPQQQSQQQLGQQPQQQQLAQGTFLQPHQIAQLEVMTSIALRILPTMCSVNVPLYRTTTSVPFGVGTGVGAY</sequence>